<gene>
    <name evidence="1" type="primary">leuD</name>
    <name type="ordered locus">PMI2087</name>
</gene>
<organism>
    <name type="scientific">Proteus mirabilis (strain HI4320)</name>
    <dbReference type="NCBI Taxonomy" id="529507"/>
    <lineage>
        <taxon>Bacteria</taxon>
        <taxon>Pseudomonadati</taxon>
        <taxon>Pseudomonadota</taxon>
        <taxon>Gammaproteobacteria</taxon>
        <taxon>Enterobacterales</taxon>
        <taxon>Morganellaceae</taxon>
        <taxon>Proteus</taxon>
    </lineage>
</organism>
<proteinExistence type="inferred from homology"/>
<keyword id="KW-0028">Amino-acid biosynthesis</keyword>
<keyword id="KW-0100">Branched-chain amino acid biosynthesis</keyword>
<keyword id="KW-0432">Leucine biosynthesis</keyword>
<keyword id="KW-0456">Lyase</keyword>
<keyword id="KW-1185">Reference proteome</keyword>
<evidence type="ECO:0000255" key="1">
    <source>
        <dbReference type="HAMAP-Rule" id="MF_01031"/>
    </source>
</evidence>
<dbReference type="EC" id="4.2.1.33" evidence="1"/>
<dbReference type="EMBL" id="AM942759">
    <property type="protein sequence ID" value="CAR44171.1"/>
    <property type="molecule type" value="Genomic_DNA"/>
</dbReference>
<dbReference type="RefSeq" id="WP_012368238.1">
    <property type="nucleotide sequence ID" value="NC_010554.1"/>
</dbReference>
<dbReference type="SMR" id="B4F197"/>
<dbReference type="EnsemblBacteria" id="CAR44171">
    <property type="protein sequence ID" value="CAR44171"/>
    <property type="gene ID" value="PMI2087"/>
</dbReference>
<dbReference type="GeneID" id="6802740"/>
<dbReference type="KEGG" id="pmr:PMI2087"/>
<dbReference type="PATRIC" id="fig|529507.6.peg.2036"/>
<dbReference type="eggNOG" id="COG0066">
    <property type="taxonomic scope" value="Bacteria"/>
</dbReference>
<dbReference type="HOGENOM" id="CLU_081378_0_3_6"/>
<dbReference type="UniPathway" id="UPA00048">
    <property type="reaction ID" value="UER00071"/>
</dbReference>
<dbReference type="Proteomes" id="UP000008319">
    <property type="component" value="Chromosome"/>
</dbReference>
<dbReference type="GO" id="GO:0009316">
    <property type="term" value="C:3-isopropylmalate dehydratase complex"/>
    <property type="evidence" value="ECO:0007669"/>
    <property type="project" value="InterPro"/>
</dbReference>
<dbReference type="GO" id="GO:0003861">
    <property type="term" value="F:3-isopropylmalate dehydratase activity"/>
    <property type="evidence" value="ECO:0007669"/>
    <property type="project" value="UniProtKB-UniRule"/>
</dbReference>
<dbReference type="GO" id="GO:0009098">
    <property type="term" value="P:L-leucine biosynthetic process"/>
    <property type="evidence" value="ECO:0007669"/>
    <property type="project" value="UniProtKB-UniRule"/>
</dbReference>
<dbReference type="CDD" id="cd01577">
    <property type="entry name" value="IPMI_Swivel"/>
    <property type="match status" value="1"/>
</dbReference>
<dbReference type="FunFam" id="3.20.19.10:FF:000003">
    <property type="entry name" value="3-isopropylmalate dehydratase small subunit"/>
    <property type="match status" value="1"/>
</dbReference>
<dbReference type="Gene3D" id="3.20.19.10">
    <property type="entry name" value="Aconitase, domain 4"/>
    <property type="match status" value="1"/>
</dbReference>
<dbReference type="HAMAP" id="MF_01031">
    <property type="entry name" value="LeuD_type1"/>
    <property type="match status" value="1"/>
</dbReference>
<dbReference type="InterPro" id="IPR004431">
    <property type="entry name" value="3-IsopropMal_deHydase_ssu"/>
</dbReference>
<dbReference type="InterPro" id="IPR015928">
    <property type="entry name" value="Aconitase/3IPM_dehydase_swvl"/>
</dbReference>
<dbReference type="InterPro" id="IPR000573">
    <property type="entry name" value="AconitaseA/IPMdHydase_ssu_swvl"/>
</dbReference>
<dbReference type="InterPro" id="IPR033940">
    <property type="entry name" value="IPMI_Swivel"/>
</dbReference>
<dbReference type="InterPro" id="IPR050075">
    <property type="entry name" value="LeuD"/>
</dbReference>
<dbReference type="NCBIfam" id="TIGR00171">
    <property type="entry name" value="leuD"/>
    <property type="match status" value="1"/>
</dbReference>
<dbReference type="NCBIfam" id="NF002458">
    <property type="entry name" value="PRK01641.1"/>
    <property type="match status" value="1"/>
</dbReference>
<dbReference type="PANTHER" id="PTHR43345:SF5">
    <property type="entry name" value="3-ISOPROPYLMALATE DEHYDRATASE SMALL SUBUNIT"/>
    <property type="match status" value="1"/>
</dbReference>
<dbReference type="PANTHER" id="PTHR43345">
    <property type="entry name" value="3-ISOPROPYLMALATE DEHYDRATASE SMALL SUBUNIT 2-RELATED-RELATED"/>
    <property type="match status" value="1"/>
</dbReference>
<dbReference type="Pfam" id="PF00694">
    <property type="entry name" value="Aconitase_C"/>
    <property type="match status" value="1"/>
</dbReference>
<dbReference type="SUPFAM" id="SSF52016">
    <property type="entry name" value="LeuD/IlvD-like"/>
    <property type="match status" value="1"/>
</dbReference>
<feature type="chain" id="PRO_1000135824" description="3-isopropylmalate dehydratase small subunit">
    <location>
        <begin position="1"/>
        <end position="200"/>
    </location>
</feature>
<accession>B4F197</accession>
<name>LEUD_PROMH</name>
<reference key="1">
    <citation type="journal article" date="2008" name="J. Bacteriol.">
        <title>Complete genome sequence of uropathogenic Proteus mirabilis, a master of both adherence and motility.</title>
        <authorList>
            <person name="Pearson M.M."/>
            <person name="Sebaihia M."/>
            <person name="Churcher C."/>
            <person name="Quail M.A."/>
            <person name="Seshasayee A.S."/>
            <person name="Luscombe N.M."/>
            <person name="Abdellah Z."/>
            <person name="Arrosmith C."/>
            <person name="Atkin B."/>
            <person name="Chillingworth T."/>
            <person name="Hauser H."/>
            <person name="Jagels K."/>
            <person name="Moule S."/>
            <person name="Mungall K."/>
            <person name="Norbertczak H."/>
            <person name="Rabbinowitsch E."/>
            <person name="Walker D."/>
            <person name="Whithead S."/>
            <person name="Thomson N.R."/>
            <person name="Rather P.N."/>
            <person name="Parkhill J."/>
            <person name="Mobley H.L.T."/>
        </authorList>
    </citation>
    <scope>NUCLEOTIDE SEQUENCE [LARGE SCALE GENOMIC DNA]</scope>
    <source>
        <strain>HI4320</strain>
    </source>
</reference>
<comment type="function">
    <text evidence="1">Catalyzes the isomerization between 2-isopropylmalate and 3-isopropylmalate, via the formation of 2-isopropylmaleate.</text>
</comment>
<comment type="catalytic activity">
    <reaction evidence="1">
        <text>(2R,3S)-3-isopropylmalate = (2S)-2-isopropylmalate</text>
        <dbReference type="Rhea" id="RHEA:32287"/>
        <dbReference type="ChEBI" id="CHEBI:1178"/>
        <dbReference type="ChEBI" id="CHEBI:35121"/>
        <dbReference type="EC" id="4.2.1.33"/>
    </reaction>
</comment>
<comment type="pathway">
    <text evidence="1">Amino-acid biosynthesis; L-leucine biosynthesis; L-leucine from 3-methyl-2-oxobutanoate: step 2/4.</text>
</comment>
<comment type="subunit">
    <text evidence="1">Heterodimer of LeuC and LeuD.</text>
</comment>
<comment type="similarity">
    <text evidence="1">Belongs to the LeuD family. LeuD type 1 subfamily.</text>
</comment>
<protein>
    <recommendedName>
        <fullName evidence="1">3-isopropylmalate dehydratase small subunit</fullName>
        <ecNumber evidence="1">4.2.1.33</ecNumber>
    </recommendedName>
    <alternativeName>
        <fullName evidence="1">Alpha-IPM isomerase</fullName>
        <shortName evidence="1">IPMI</shortName>
    </alternativeName>
    <alternativeName>
        <fullName evidence="1">Isopropylmalate isomerase</fullName>
    </alternativeName>
</protein>
<sequence>MNKFTQHTGIPVPLDAANVDTDAIIPKQFLQKVTRTGFGKHLFHDWRFLDDEGTQPNPSFILNQPIYQDASILLARENFGCGSSREHAPWALTDYGFHAVIAPSFADIFYGNSFNNQLLPIKLSDEQVTQLFNWVTEHAGTPITVDLVAQQVIAGELCFSFEIDAFRRHCMIEGLDSIGLTLQHQAEISAYEAKQPAFMR</sequence>